<organism>
    <name type="scientific">Pseudomonas putida (strain ATCC 47054 / DSM 6125 / CFBP 8728 / NCIMB 11950 / KT2440)</name>
    <dbReference type="NCBI Taxonomy" id="160488"/>
    <lineage>
        <taxon>Bacteria</taxon>
        <taxon>Pseudomonadati</taxon>
        <taxon>Pseudomonadota</taxon>
        <taxon>Gammaproteobacteria</taxon>
        <taxon>Pseudomonadales</taxon>
        <taxon>Pseudomonadaceae</taxon>
        <taxon>Pseudomonas</taxon>
    </lineage>
</organism>
<name>Y4587_PSEPK</name>
<protein>
    <recommendedName>
        <fullName evidence="1">UPF0260 protein PP_4587</fullName>
    </recommendedName>
</protein>
<sequence>MMIAENAPFWRRKTLEELSQQEWESLCDGCGLCCLQKLEDEDDNSVYYTRIACKLLDLNTCQCSDYPNRFAQVPDCIQLTPGKADQFKWLPSTCGYRLVSEGKDLPAWHHLVCGDRQQVHEQRISQSGRMLSEHDVHEDDWEDHLIFRAS</sequence>
<dbReference type="EMBL" id="AE015451">
    <property type="protein sequence ID" value="AAN70160.1"/>
    <property type="molecule type" value="Genomic_DNA"/>
</dbReference>
<dbReference type="RefSeq" id="NP_746696.2">
    <property type="nucleotide sequence ID" value="NC_002947.4"/>
</dbReference>
<dbReference type="STRING" id="160488.PP_4587"/>
<dbReference type="PaxDb" id="160488-PP_4587"/>
<dbReference type="KEGG" id="ppu:PP_4587"/>
<dbReference type="PATRIC" id="fig|160488.4.peg.4891"/>
<dbReference type="eggNOG" id="COG2983">
    <property type="taxonomic scope" value="Bacteria"/>
</dbReference>
<dbReference type="HOGENOM" id="CLU_109769_0_1_6"/>
<dbReference type="OrthoDB" id="9786855at2"/>
<dbReference type="PhylomeDB" id="Q88E79"/>
<dbReference type="Proteomes" id="UP000000556">
    <property type="component" value="Chromosome"/>
</dbReference>
<dbReference type="HAMAP" id="MF_00676">
    <property type="entry name" value="UPF0260"/>
    <property type="match status" value="1"/>
</dbReference>
<dbReference type="InterPro" id="IPR005358">
    <property type="entry name" value="Puta_zinc/iron-chelating_dom"/>
</dbReference>
<dbReference type="InterPro" id="IPR008228">
    <property type="entry name" value="UCP006173"/>
</dbReference>
<dbReference type="NCBIfam" id="NF003501">
    <property type="entry name" value="PRK05170.1-5"/>
    <property type="match status" value="1"/>
</dbReference>
<dbReference type="NCBIfam" id="NF003502">
    <property type="entry name" value="PRK05170.1-6"/>
    <property type="match status" value="1"/>
</dbReference>
<dbReference type="NCBIfam" id="NF003507">
    <property type="entry name" value="PRK05170.2-5"/>
    <property type="match status" value="1"/>
</dbReference>
<dbReference type="PANTHER" id="PTHR37421">
    <property type="entry name" value="UPF0260 PROTEIN YCGN"/>
    <property type="match status" value="1"/>
</dbReference>
<dbReference type="PANTHER" id="PTHR37421:SF1">
    <property type="entry name" value="UPF0260 PROTEIN YCGN"/>
    <property type="match status" value="1"/>
</dbReference>
<dbReference type="Pfam" id="PF03692">
    <property type="entry name" value="CxxCxxCC"/>
    <property type="match status" value="1"/>
</dbReference>
<dbReference type="PIRSF" id="PIRSF006173">
    <property type="entry name" value="UCP006173"/>
    <property type="match status" value="1"/>
</dbReference>
<comment type="similarity">
    <text evidence="1">Belongs to the UPF0260 family.</text>
</comment>
<accession>Q88E79</accession>
<keyword id="KW-1185">Reference proteome</keyword>
<reference key="1">
    <citation type="journal article" date="2002" name="Environ. Microbiol.">
        <title>Complete genome sequence and comparative analysis of the metabolically versatile Pseudomonas putida KT2440.</title>
        <authorList>
            <person name="Nelson K.E."/>
            <person name="Weinel C."/>
            <person name="Paulsen I.T."/>
            <person name="Dodson R.J."/>
            <person name="Hilbert H."/>
            <person name="Martins dos Santos V.A.P."/>
            <person name="Fouts D.E."/>
            <person name="Gill S.R."/>
            <person name="Pop M."/>
            <person name="Holmes M."/>
            <person name="Brinkac L.M."/>
            <person name="Beanan M.J."/>
            <person name="DeBoy R.T."/>
            <person name="Daugherty S.C."/>
            <person name="Kolonay J.F."/>
            <person name="Madupu R."/>
            <person name="Nelson W.C."/>
            <person name="White O."/>
            <person name="Peterson J.D."/>
            <person name="Khouri H.M."/>
            <person name="Hance I."/>
            <person name="Chris Lee P."/>
            <person name="Holtzapple E.K."/>
            <person name="Scanlan D."/>
            <person name="Tran K."/>
            <person name="Moazzez A."/>
            <person name="Utterback T.R."/>
            <person name="Rizzo M."/>
            <person name="Lee K."/>
            <person name="Kosack D."/>
            <person name="Moestl D."/>
            <person name="Wedler H."/>
            <person name="Lauber J."/>
            <person name="Stjepandic D."/>
            <person name="Hoheisel J."/>
            <person name="Straetz M."/>
            <person name="Heim S."/>
            <person name="Kiewitz C."/>
            <person name="Eisen J.A."/>
            <person name="Timmis K.N."/>
            <person name="Duesterhoeft A."/>
            <person name="Tuemmler B."/>
            <person name="Fraser C.M."/>
        </authorList>
    </citation>
    <scope>NUCLEOTIDE SEQUENCE [LARGE SCALE GENOMIC DNA]</scope>
    <source>
        <strain>ATCC 47054 / DSM 6125 / CFBP 8728 / NCIMB 11950 / KT2440</strain>
    </source>
</reference>
<evidence type="ECO:0000255" key="1">
    <source>
        <dbReference type="HAMAP-Rule" id="MF_00676"/>
    </source>
</evidence>
<feature type="chain" id="PRO_0000214586" description="UPF0260 protein PP_4587">
    <location>
        <begin position="1"/>
        <end position="150"/>
    </location>
</feature>
<proteinExistence type="inferred from homology"/>
<gene>
    <name type="ordered locus">PP_4587</name>
</gene>